<dbReference type="EC" id="6.3.5.3" evidence="1"/>
<dbReference type="EMBL" id="CP000736">
    <property type="protein sequence ID" value="ABR52005.1"/>
    <property type="molecule type" value="Genomic_DNA"/>
</dbReference>
<dbReference type="SMR" id="A6U0N7"/>
<dbReference type="KEGG" id="sah:SaurJH1_1151"/>
<dbReference type="HOGENOM" id="CLU_003100_0_1_9"/>
<dbReference type="UniPathway" id="UPA00074">
    <property type="reaction ID" value="UER00128"/>
</dbReference>
<dbReference type="GO" id="GO:0005737">
    <property type="term" value="C:cytoplasm"/>
    <property type="evidence" value="ECO:0007669"/>
    <property type="project" value="UniProtKB-SubCell"/>
</dbReference>
<dbReference type="GO" id="GO:0005524">
    <property type="term" value="F:ATP binding"/>
    <property type="evidence" value="ECO:0007669"/>
    <property type="project" value="UniProtKB-UniRule"/>
</dbReference>
<dbReference type="GO" id="GO:0000287">
    <property type="term" value="F:magnesium ion binding"/>
    <property type="evidence" value="ECO:0007669"/>
    <property type="project" value="UniProtKB-UniRule"/>
</dbReference>
<dbReference type="GO" id="GO:0004642">
    <property type="term" value="F:phosphoribosylformylglycinamidine synthase activity"/>
    <property type="evidence" value="ECO:0007669"/>
    <property type="project" value="UniProtKB-UniRule"/>
</dbReference>
<dbReference type="GO" id="GO:0006189">
    <property type="term" value="P:'de novo' IMP biosynthetic process"/>
    <property type="evidence" value="ECO:0007669"/>
    <property type="project" value="UniProtKB-UniRule"/>
</dbReference>
<dbReference type="CDD" id="cd02203">
    <property type="entry name" value="PurL_repeat1"/>
    <property type="match status" value="1"/>
</dbReference>
<dbReference type="CDD" id="cd02204">
    <property type="entry name" value="PurL_repeat2"/>
    <property type="match status" value="1"/>
</dbReference>
<dbReference type="FunFam" id="3.30.1330.10:FF:000004">
    <property type="entry name" value="Phosphoribosylformylglycinamidine synthase subunit PurL"/>
    <property type="match status" value="1"/>
</dbReference>
<dbReference type="Gene3D" id="3.90.650.10">
    <property type="entry name" value="PurM-like C-terminal domain"/>
    <property type="match status" value="2"/>
</dbReference>
<dbReference type="Gene3D" id="3.30.1330.10">
    <property type="entry name" value="PurM-like, N-terminal domain"/>
    <property type="match status" value="2"/>
</dbReference>
<dbReference type="HAMAP" id="MF_00420">
    <property type="entry name" value="PurL_2"/>
    <property type="match status" value="1"/>
</dbReference>
<dbReference type="InterPro" id="IPR010074">
    <property type="entry name" value="PRibForGlyAmidine_synth_PurL"/>
</dbReference>
<dbReference type="InterPro" id="IPR041609">
    <property type="entry name" value="PurL_linker"/>
</dbReference>
<dbReference type="InterPro" id="IPR010918">
    <property type="entry name" value="PurM-like_C_dom"/>
</dbReference>
<dbReference type="InterPro" id="IPR036676">
    <property type="entry name" value="PurM-like_C_sf"/>
</dbReference>
<dbReference type="InterPro" id="IPR016188">
    <property type="entry name" value="PurM-like_N"/>
</dbReference>
<dbReference type="InterPro" id="IPR036921">
    <property type="entry name" value="PurM-like_N_sf"/>
</dbReference>
<dbReference type="NCBIfam" id="TIGR01736">
    <property type="entry name" value="FGAM_synth_II"/>
    <property type="match status" value="1"/>
</dbReference>
<dbReference type="NCBIfam" id="NF002290">
    <property type="entry name" value="PRK01213.1"/>
    <property type="match status" value="1"/>
</dbReference>
<dbReference type="PANTHER" id="PTHR43555">
    <property type="entry name" value="PHOSPHORIBOSYLFORMYLGLYCINAMIDINE SYNTHASE SUBUNIT PURL"/>
    <property type="match status" value="1"/>
</dbReference>
<dbReference type="PANTHER" id="PTHR43555:SF1">
    <property type="entry name" value="PHOSPHORIBOSYLFORMYLGLYCINAMIDINE SYNTHASE SUBUNIT PURL"/>
    <property type="match status" value="1"/>
</dbReference>
<dbReference type="Pfam" id="PF00586">
    <property type="entry name" value="AIRS"/>
    <property type="match status" value="2"/>
</dbReference>
<dbReference type="Pfam" id="PF02769">
    <property type="entry name" value="AIRS_C"/>
    <property type="match status" value="1"/>
</dbReference>
<dbReference type="Pfam" id="PF18072">
    <property type="entry name" value="FGAR-AT_linker"/>
    <property type="match status" value="1"/>
</dbReference>
<dbReference type="PIRSF" id="PIRSF001587">
    <property type="entry name" value="FGAM_synthase_II"/>
    <property type="match status" value="1"/>
</dbReference>
<dbReference type="SUPFAM" id="SSF56042">
    <property type="entry name" value="PurM C-terminal domain-like"/>
    <property type="match status" value="2"/>
</dbReference>
<dbReference type="SUPFAM" id="SSF55326">
    <property type="entry name" value="PurM N-terminal domain-like"/>
    <property type="match status" value="2"/>
</dbReference>
<feature type="chain" id="PRO_1000080555" description="Phosphoribosylformylglycinamidine synthase subunit PurL">
    <location>
        <begin position="1"/>
        <end position="729"/>
    </location>
</feature>
<feature type="active site" evidence="1">
    <location>
        <position position="54"/>
    </location>
</feature>
<feature type="active site" description="Proton acceptor" evidence="1">
    <location>
        <position position="100"/>
    </location>
</feature>
<feature type="binding site" evidence="1">
    <location>
        <position position="57"/>
    </location>
    <ligand>
        <name>ATP</name>
        <dbReference type="ChEBI" id="CHEBI:30616"/>
    </ligand>
</feature>
<feature type="binding site" evidence="1">
    <location>
        <position position="96"/>
    </location>
    <ligand>
        <name>ATP</name>
        <dbReference type="ChEBI" id="CHEBI:30616"/>
    </ligand>
</feature>
<feature type="binding site" evidence="1">
    <location>
        <position position="98"/>
    </location>
    <ligand>
        <name>Mg(2+)</name>
        <dbReference type="ChEBI" id="CHEBI:18420"/>
        <label>1</label>
    </ligand>
</feature>
<feature type="binding site" evidence="1">
    <location>
        <begin position="99"/>
        <end position="102"/>
    </location>
    <ligand>
        <name>substrate</name>
    </ligand>
</feature>
<feature type="binding site" evidence="1">
    <location>
        <position position="121"/>
    </location>
    <ligand>
        <name>substrate</name>
    </ligand>
</feature>
<feature type="binding site" evidence="1">
    <location>
        <position position="122"/>
    </location>
    <ligand>
        <name>Mg(2+)</name>
        <dbReference type="ChEBI" id="CHEBI:18420"/>
        <label>2</label>
    </ligand>
</feature>
<feature type="binding site" evidence="1">
    <location>
        <position position="245"/>
    </location>
    <ligand>
        <name>substrate</name>
    </ligand>
</feature>
<feature type="binding site" evidence="1">
    <location>
        <position position="273"/>
    </location>
    <ligand>
        <name>Mg(2+)</name>
        <dbReference type="ChEBI" id="CHEBI:18420"/>
        <label>2</label>
    </ligand>
</feature>
<feature type="binding site" evidence="1">
    <location>
        <begin position="317"/>
        <end position="319"/>
    </location>
    <ligand>
        <name>substrate</name>
    </ligand>
</feature>
<feature type="binding site" evidence="1">
    <location>
        <position position="495"/>
    </location>
    <ligand>
        <name>ATP</name>
        <dbReference type="ChEBI" id="CHEBI:30616"/>
    </ligand>
</feature>
<feature type="binding site" evidence="1">
    <location>
        <position position="532"/>
    </location>
    <ligand>
        <name>ATP</name>
        <dbReference type="ChEBI" id="CHEBI:30616"/>
    </ligand>
</feature>
<feature type="binding site" evidence="1">
    <location>
        <position position="533"/>
    </location>
    <ligand>
        <name>Mg(2+)</name>
        <dbReference type="ChEBI" id="CHEBI:18420"/>
        <label>1</label>
    </ligand>
</feature>
<feature type="binding site" evidence="1">
    <location>
        <position position="535"/>
    </location>
    <ligand>
        <name>substrate</name>
    </ligand>
</feature>
<protein>
    <recommendedName>
        <fullName evidence="1">Phosphoribosylformylglycinamidine synthase subunit PurL</fullName>
        <shortName evidence="1">FGAM synthase</shortName>
        <ecNumber evidence="1">6.3.5.3</ecNumber>
    </recommendedName>
    <alternativeName>
        <fullName evidence="1">Formylglycinamide ribonucleotide amidotransferase subunit II</fullName>
        <shortName evidence="1">FGAR amidotransferase II</shortName>
        <shortName evidence="1">FGAR-AT II</shortName>
    </alternativeName>
    <alternativeName>
        <fullName evidence="1">Glutamine amidotransferase PurL</fullName>
    </alternativeName>
    <alternativeName>
        <fullName evidence="1">Phosphoribosylformylglycinamidine synthase subunit II</fullName>
    </alternativeName>
</protein>
<comment type="function">
    <text evidence="1">Part of the phosphoribosylformylglycinamidine synthase complex involved in the purines biosynthetic pathway. Catalyzes the ATP-dependent conversion of formylglycinamide ribonucleotide (FGAR) and glutamine to yield formylglycinamidine ribonucleotide (FGAM) and glutamate. The FGAM synthase complex is composed of three subunits. PurQ produces an ammonia molecule by converting glutamine to glutamate. PurL transfers the ammonia molecule to FGAR to form FGAM in an ATP-dependent manner. PurS interacts with PurQ and PurL and is thought to assist in the transfer of the ammonia molecule from PurQ to PurL.</text>
</comment>
<comment type="catalytic activity">
    <reaction evidence="1">
        <text>N(2)-formyl-N(1)-(5-phospho-beta-D-ribosyl)glycinamide + L-glutamine + ATP + H2O = 2-formamido-N(1)-(5-O-phospho-beta-D-ribosyl)acetamidine + L-glutamate + ADP + phosphate + H(+)</text>
        <dbReference type="Rhea" id="RHEA:17129"/>
        <dbReference type="ChEBI" id="CHEBI:15377"/>
        <dbReference type="ChEBI" id="CHEBI:15378"/>
        <dbReference type="ChEBI" id="CHEBI:29985"/>
        <dbReference type="ChEBI" id="CHEBI:30616"/>
        <dbReference type="ChEBI" id="CHEBI:43474"/>
        <dbReference type="ChEBI" id="CHEBI:58359"/>
        <dbReference type="ChEBI" id="CHEBI:147286"/>
        <dbReference type="ChEBI" id="CHEBI:147287"/>
        <dbReference type="ChEBI" id="CHEBI:456216"/>
        <dbReference type="EC" id="6.3.5.3"/>
    </reaction>
</comment>
<comment type="pathway">
    <text evidence="1">Purine metabolism; IMP biosynthesis via de novo pathway; 5-amino-1-(5-phospho-D-ribosyl)imidazole from N(2)-formyl-N(1)-(5-phospho-D-ribosyl)glycinamide: step 1/2.</text>
</comment>
<comment type="subunit">
    <text evidence="1">Monomer. Part of the FGAM synthase complex composed of 1 PurL, 1 PurQ and 2 PurS subunits.</text>
</comment>
<comment type="subcellular location">
    <subcellularLocation>
        <location evidence="1">Cytoplasm</location>
    </subcellularLocation>
</comment>
<comment type="similarity">
    <text evidence="1">Belongs to the FGAMS family.</text>
</comment>
<keyword id="KW-0067">ATP-binding</keyword>
<keyword id="KW-0963">Cytoplasm</keyword>
<keyword id="KW-0436">Ligase</keyword>
<keyword id="KW-0460">Magnesium</keyword>
<keyword id="KW-0479">Metal-binding</keyword>
<keyword id="KW-0547">Nucleotide-binding</keyword>
<keyword id="KW-0658">Purine biosynthesis</keyword>
<gene>
    <name evidence="1" type="primary">purL</name>
    <name type="ordered locus">SaurJH1_1151</name>
</gene>
<name>PURL_STAA2</name>
<proteinExistence type="inferred from homology"/>
<sequence>MSKFIEPSVEEIKLEKVYQDMGLSDQEYEKVCDILGRQPNFTETGIFSVMWSEHCSYKHSKPFLKQFPTSGEHVLMGPGEGAGVVDIGDNQAVVFKVESHNHPSAIEPYQGAATGVGGIIRDIVSIGARPINLLNSLRFGELDNKQNQRLLKGVVKGIGGYGNCIGIPTTAGEIEFDERYDGNPLVNAMCVGVINHDMIQKGTAKGVGNSVIYVGLKTGRDGIHGATFASEELTEESESKRPSVQIGDPFVGKKLMEATLEAITFDELVGIQDMGAAGLTSSSSEMAAKGGSGLHLRLEQVPTREPGISPYEMMLSETQERMLLVVEKGNEQKFLDLFDKHELDSAVIGEVTDTNRFVLTYDDEVYADIPVEPLADEAPVYILEGEEKDYNTSKNDYTHIDVKDTFFKLLKHPTIASKHYLYDQYDQQVGANTIIKPGLQASVVRVEGTNKAIASTIDGEARYVYNNPYEGGKMVVAEAYRNLIAVGATPLAMTDCLNYGSPEKKEIYQQLIDSTKGMAEACDILKTPVVSGNVSLYNETKGTSIFPTPVVGMVGLIENVNYLNDFEPQVGDKLYLIGDTKDDFGGSQLEKLIYGKVNHEFESLDLSSEVEKGESIKTAIREGLLSHVQTVGKGGLLITLAKLSAHYGLGLKSSIDITNAQLFSETQGRYVVSVKSGKTLNIDNAIEIGLLTDSDNFKVTTPYTEISENVSDIKQIWEGAIAQCLTTQD</sequence>
<reference key="1">
    <citation type="submission" date="2007-06" db="EMBL/GenBank/DDBJ databases">
        <title>Complete sequence of chromosome of Staphylococcus aureus subsp. aureus JH1.</title>
        <authorList>
            <consortium name="US DOE Joint Genome Institute"/>
            <person name="Copeland A."/>
            <person name="Lucas S."/>
            <person name="Lapidus A."/>
            <person name="Barry K."/>
            <person name="Detter J.C."/>
            <person name="Glavina del Rio T."/>
            <person name="Hammon N."/>
            <person name="Israni S."/>
            <person name="Dalin E."/>
            <person name="Tice H."/>
            <person name="Pitluck S."/>
            <person name="Chain P."/>
            <person name="Malfatti S."/>
            <person name="Shin M."/>
            <person name="Vergez L."/>
            <person name="Schmutz J."/>
            <person name="Larimer F."/>
            <person name="Land M."/>
            <person name="Hauser L."/>
            <person name="Kyrpides N."/>
            <person name="Ivanova N."/>
            <person name="Tomasz A."/>
            <person name="Richardson P."/>
        </authorList>
    </citation>
    <scope>NUCLEOTIDE SEQUENCE [LARGE SCALE GENOMIC DNA]</scope>
    <source>
        <strain>JH1</strain>
    </source>
</reference>
<organism>
    <name type="scientific">Staphylococcus aureus (strain JH1)</name>
    <dbReference type="NCBI Taxonomy" id="359787"/>
    <lineage>
        <taxon>Bacteria</taxon>
        <taxon>Bacillati</taxon>
        <taxon>Bacillota</taxon>
        <taxon>Bacilli</taxon>
        <taxon>Bacillales</taxon>
        <taxon>Staphylococcaceae</taxon>
        <taxon>Staphylococcus</taxon>
    </lineage>
</organism>
<accession>A6U0N7</accession>
<evidence type="ECO:0000255" key="1">
    <source>
        <dbReference type="HAMAP-Rule" id="MF_00420"/>
    </source>
</evidence>